<feature type="chain" id="PRO_0000356819" description="Large ribosomal subunit protein bL33c">
    <location>
        <begin position="1"/>
        <end position="66"/>
    </location>
</feature>
<dbReference type="EMBL" id="EU262891">
    <property type="protein sequence ID" value="ABX10142.1"/>
    <property type="molecule type" value="Genomic_DNA"/>
</dbReference>
<dbReference type="RefSeq" id="YP_001687472.1">
    <property type="nucleotide sequence ID" value="NC_010362.1"/>
</dbReference>
<dbReference type="GeneID" id="5955381"/>
<dbReference type="GO" id="GO:0009507">
    <property type="term" value="C:chloroplast"/>
    <property type="evidence" value="ECO:0007669"/>
    <property type="project" value="UniProtKB-SubCell"/>
</dbReference>
<dbReference type="GO" id="GO:1990904">
    <property type="term" value="C:ribonucleoprotein complex"/>
    <property type="evidence" value="ECO:0007669"/>
    <property type="project" value="UniProtKB-KW"/>
</dbReference>
<dbReference type="GO" id="GO:0005840">
    <property type="term" value="C:ribosome"/>
    <property type="evidence" value="ECO:0007669"/>
    <property type="project" value="UniProtKB-KW"/>
</dbReference>
<dbReference type="GO" id="GO:0003735">
    <property type="term" value="F:structural constituent of ribosome"/>
    <property type="evidence" value="ECO:0007669"/>
    <property type="project" value="InterPro"/>
</dbReference>
<dbReference type="GO" id="GO:0006412">
    <property type="term" value="P:translation"/>
    <property type="evidence" value="ECO:0007669"/>
    <property type="project" value="UniProtKB-UniRule"/>
</dbReference>
<dbReference type="Gene3D" id="2.20.28.120">
    <property type="entry name" value="Ribosomal protein L33"/>
    <property type="match status" value="1"/>
</dbReference>
<dbReference type="HAMAP" id="MF_00294">
    <property type="entry name" value="Ribosomal_bL33"/>
    <property type="match status" value="1"/>
</dbReference>
<dbReference type="InterPro" id="IPR001705">
    <property type="entry name" value="Ribosomal_bL33"/>
</dbReference>
<dbReference type="InterPro" id="IPR018264">
    <property type="entry name" value="Ribosomal_bL33_CS"/>
</dbReference>
<dbReference type="InterPro" id="IPR038584">
    <property type="entry name" value="Ribosomal_bL33_sf"/>
</dbReference>
<dbReference type="InterPro" id="IPR011332">
    <property type="entry name" value="Ribosomal_zn-bd"/>
</dbReference>
<dbReference type="NCBIfam" id="NF001764">
    <property type="entry name" value="PRK00504.1"/>
    <property type="match status" value="1"/>
</dbReference>
<dbReference type="NCBIfam" id="NF001860">
    <property type="entry name" value="PRK00595.1"/>
    <property type="match status" value="1"/>
</dbReference>
<dbReference type="NCBIfam" id="TIGR01023">
    <property type="entry name" value="rpmG_bact"/>
    <property type="match status" value="1"/>
</dbReference>
<dbReference type="PANTHER" id="PTHR43168">
    <property type="entry name" value="50S RIBOSOMAL PROTEIN L33, CHLOROPLASTIC"/>
    <property type="match status" value="1"/>
</dbReference>
<dbReference type="PANTHER" id="PTHR43168:SF2">
    <property type="entry name" value="LARGE RIBOSOMAL SUBUNIT PROTEIN BL33C"/>
    <property type="match status" value="1"/>
</dbReference>
<dbReference type="Pfam" id="PF00471">
    <property type="entry name" value="Ribosomal_L33"/>
    <property type="match status" value="1"/>
</dbReference>
<dbReference type="SUPFAM" id="SSF57829">
    <property type="entry name" value="Zn-binding ribosomal proteins"/>
    <property type="match status" value="1"/>
</dbReference>
<dbReference type="PROSITE" id="PS00582">
    <property type="entry name" value="RIBOSOMAL_L33"/>
    <property type="match status" value="1"/>
</dbReference>
<geneLocation type="chloroplast"/>
<proteinExistence type="inferred from homology"/>
<reference key="1">
    <citation type="journal article" date="2008" name="Nucleic Acids Res.">
        <title>The complete nucleotide sequences of the five genetically distinct plastid genomes of Oenothera, subsection Oenothera: I. Sequence evaluation and plastome evolution.</title>
        <authorList>
            <person name="Greiner S."/>
            <person name="Wang X."/>
            <person name="Rauwolf U."/>
            <person name="Silber M.V."/>
            <person name="Mayer K."/>
            <person name="Meurer J."/>
            <person name="Haberer G."/>
            <person name="Herrmann R.G."/>
        </authorList>
    </citation>
    <scope>NUCLEOTIDE SEQUENCE [LARGE SCALE GENOMIC DNA]</scope>
    <source>
        <strain>cv. Atrovirens</strain>
    </source>
</reference>
<sequence>MARGKDARVTVILECTNCVRGGVTKESTGISRYITEKNRHNTPGQLELKKFCPYCYKQTIHGEIKK</sequence>
<evidence type="ECO:0000255" key="1">
    <source>
        <dbReference type="HAMAP-Rule" id="MF_00294"/>
    </source>
</evidence>
<evidence type="ECO:0000305" key="2"/>
<accession>B0Z5E9</accession>
<name>RK33_OENPA</name>
<gene>
    <name evidence="1" type="primary">rpl33</name>
</gene>
<comment type="subcellular location">
    <subcellularLocation>
        <location>Plastid</location>
        <location>Chloroplast</location>
    </subcellularLocation>
</comment>
<comment type="similarity">
    <text evidence="1">Belongs to the bacterial ribosomal protein bL33 family.</text>
</comment>
<protein>
    <recommendedName>
        <fullName evidence="1">Large ribosomal subunit protein bL33c</fullName>
    </recommendedName>
    <alternativeName>
        <fullName evidence="2">50S ribosomal protein L33, chloroplastic</fullName>
    </alternativeName>
</protein>
<keyword id="KW-0150">Chloroplast</keyword>
<keyword id="KW-0934">Plastid</keyword>
<keyword id="KW-0687">Ribonucleoprotein</keyword>
<keyword id="KW-0689">Ribosomal protein</keyword>
<organism>
    <name type="scientific">Oenothera parviflora</name>
    <name type="common">Small-flowered evening primrose</name>
    <name type="synonym">Oenothera cruciata</name>
    <dbReference type="NCBI Taxonomy" id="482429"/>
    <lineage>
        <taxon>Eukaryota</taxon>
        <taxon>Viridiplantae</taxon>
        <taxon>Streptophyta</taxon>
        <taxon>Embryophyta</taxon>
        <taxon>Tracheophyta</taxon>
        <taxon>Spermatophyta</taxon>
        <taxon>Magnoliopsida</taxon>
        <taxon>eudicotyledons</taxon>
        <taxon>Gunneridae</taxon>
        <taxon>Pentapetalae</taxon>
        <taxon>rosids</taxon>
        <taxon>malvids</taxon>
        <taxon>Myrtales</taxon>
        <taxon>Onagraceae</taxon>
        <taxon>Onagroideae</taxon>
        <taxon>Onagreae</taxon>
        <taxon>Oenothera</taxon>
    </lineage>
</organism>